<reference key="1">
    <citation type="submission" date="2006-10" db="EMBL/GenBank/DDBJ databases">
        <authorList>
            <consortium name="Sanger Xenopus tropicalis EST/cDNA project"/>
        </authorList>
    </citation>
    <scope>NUCLEOTIDE SEQUENCE [LARGE SCALE MRNA]</scope>
    <source>
        <tissue>Neurula</tissue>
    </source>
</reference>
<keyword id="KW-0479">Metal-binding</keyword>
<keyword id="KW-0539">Nucleus</keyword>
<keyword id="KW-1185">Reference proteome</keyword>
<keyword id="KW-0678">Repressor</keyword>
<keyword id="KW-0804">Transcription</keyword>
<keyword id="KW-0805">Transcription regulation</keyword>
<keyword id="KW-0862">Zinc</keyword>
<keyword id="KW-0863">Zinc-finger</keyword>
<evidence type="ECO:0000250" key="1">
    <source>
        <dbReference type="UniProtKB" id="Q3KNV8"/>
    </source>
</evidence>
<evidence type="ECO:0000255" key="2">
    <source>
        <dbReference type="PROSITE-ProRule" id="PRU00175"/>
    </source>
</evidence>
<evidence type="ECO:0000256" key="3">
    <source>
        <dbReference type="SAM" id="MobiDB-lite"/>
    </source>
</evidence>
<dbReference type="EMBL" id="CR855442">
    <property type="protein sequence ID" value="CAL49402.1"/>
    <property type="molecule type" value="mRNA"/>
</dbReference>
<dbReference type="RefSeq" id="NP_001016847.1">
    <property type="nucleotide sequence ID" value="NM_001016847.1"/>
</dbReference>
<dbReference type="SMR" id="Q07G17"/>
<dbReference type="FunCoup" id="Q07G17">
    <property type="interactions" value="2936"/>
</dbReference>
<dbReference type="STRING" id="8364.ENSXETP00000015869"/>
<dbReference type="PaxDb" id="8364-ENSXETP00000010700"/>
<dbReference type="GeneID" id="549601"/>
<dbReference type="KEGG" id="xtr:549601"/>
<dbReference type="AGR" id="Xenbase:XB-GENE-987640"/>
<dbReference type="CTD" id="10336"/>
<dbReference type="Xenbase" id="XB-GENE-987640">
    <property type="gene designation" value="pcgf3"/>
</dbReference>
<dbReference type="eggNOG" id="KOG2660">
    <property type="taxonomic scope" value="Eukaryota"/>
</dbReference>
<dbReference type="InParanoid" id="Q07G17"/>
<dbReference type="OMA" id="EHITCEI"/>
<dbReference type="OrthoDB" id="1305878at2759"/>
<dbReference type="Proteomes" id="UP000008143">
    <property type="component" value="Chromosome 1"/>
</dbReference>
<dbReference type="Bgee" id="ENSXETG00000004916">
    <property type="expression patterns" value="Expressed in ovary and 12 other cell types or tissues"/>
</dbReference>
<dbReference type="GO" id="GO:0031519">
    <property type="term" value="C:PcG protein complex"/>
    <property type="evidence" value="ECO:0000250"/>
    <property type="project" value="UniProtKB"/>
</dbReference>
<dbReference type="GO" id="GO:0008270">
    <property type="term" value="F:zinc ion binding"/>
    <property type="evidence" value="ECO:0007669"/>
    <property type="project" value="UniProtKB-KW"/>
</dbReference>
<dbReference type="CDD" id="cd17083">
    <property type="entry name" value="RAWUL_PCGF3"/>
    <property type="match status" value="1"/>
</dbReference>
<dbReference type="CDD" id="cd16735">
    <property type="entry name" value="RING-HC_PCGF3"/>
    <property type="match status" value="1"/>
</dbReference>
<dbReference type="FunFam" id="3.10.20.90:FF:000073">
    <property type="entry name" value="Polycomb group RING finger protein 3"/>
    <property type="match status" value="1"/>
</dbReference>
<dbReference type="FunFam" id="3.30.40.10:FF:000033">
    <property type="entry name" value="Polycomb group RING finger protein 3"/>
    <property type="match status" value="1"/>
</dbReference>
<dbReference type="Gene3D" id="3.10.20.90">
    <property type="entry name" value="Phosphatidylinositol 3-kinase Catalytic Subunit, Chain A, domain 1"/>
    <property type="match status" value="1"/>
</dbReference>
<dbReference type="Gene3D" id="3.30.40.10">
    <property type="entry name" value="Zinc/RING finger domain, C3HC4 (zinc finger)"/>
    <property type="match status" value="1"/>
</dbReference>
<dbReference type="InterPro" id="IPR051507">
    <property type="entry name" value="PcG_RING_finger"/>
</dbReference>
<dbReference type="InterPro" id="IPR032443">
    <property type="entry name" value="RAWUL"/>
</dbReference>
<dbReference type="InterPro" id="IPR001841">
    <property type="entry name" value="Znf_RING"/>
</dbReference>
<dbReference type="InterPro" id="IPR013083">
    <property type="entry name" value="Znf_RING/FYVE/PHD"/>
</dbReference>
<dbReference type="InterPro" id="IPR017907">
    <property type="entry name" value="Znf_RING_CS"/>
</dbReference>
<dbReference type="PANTHER" id="PTHR45893">
    <property type="entry name" value="POLYCOMB GROUP RING FINGER PROTEIN"/>
    <property type="match status" value="1"/>
</dbReference>
<dbReference type="Pfam" id="PF16207">
    <property type="entry name" value="RAWUL"/>
    <property type="match status" value="1"/>
</dbReference>
<dbReference type="Pfam" id="PF13923">
    <property type="entry name" value="zf-C3HC4_2"/>
    <property type="match status" value="1"/>
</dbReference>
<dbReference type="SMART" id="SM00184">
    <property type="entry name" value="RING"/>
    <property type="match status" value="1"/>
</dbReference>
<dbReference type="SUPFAM" id="SSF57850">
    <property type="entry name" value="RING/U-box"/>
    <property type="match status" value="1"/>
</dbReference>
<dbReference type="PROSITE" id="PS00518">
    <property type="entry name" value="ZF_RING_1"/>
    <property type="match status" value="1"/>
</dbReference>
<dbReference type="PROSITE" id="PS50089">
    <property type="entry name" value="ZF_RING_2"/>
    <property type="match status" value="1"/>
</dbReference>
<protein>
    <recommendedName>
        <fullName>Polycomb group RING finger protein 3</fullName>
    </recommendedName>
</protein>
<feature type="chain" id="PRO_0000277866" description="Polycomb group RING finger protein 3">
    <location>
        <begin position="1"/>
        <end position="242"/>
    </location>
</feature>
<feature type="zinc finger region" description="RING-type" evidence="2">
    <location>
        <begin position="17"/>
        <end position="56"/>
    </location>
</feature>
<feature type="region of interest" description="Disordered" evidence="3">
    <location>
        <begin position="120"/>
        <end position="149"/>
    </location>
</feature>
<sequence>MLTRKIKLWDINAHITCRLCNGYLIDATTVTECLHTFCRSCLVKYLEENNTCPTCRIVIHQSHPLQYIGHDRTMQDIVYKLVPGLQEAEMRKQREFYHKLGMEVPGDIKAEILTVKQHVEAHRNGETKTDEHTHKEPPEEKQEEDHDYHRSDEQVSICLECNSSKLRGLKRKWIRCSAQATVLHLKKFIAKKLNLSSFNELDILCNEEILGKDHTLKFVVVTRWRFKKAPLLLHYRPKMDLL</sequence>
<name>PCGF3_XENTR</name>
<gene>
    <name type="primary">pcgf3</name>
    <name type="ORF">TNeu137d10.1</name>
</gene>
<proteinExistence type="evidence at transcript level"/>
<accession>Q07G17</accession>
<comment type="function">
    <text evidence="1">Component of a Polycomb group (PcG) multiprotein PRC1-like complex, a complex class required to maintain the transcriptionally repressive state of many genes, including Hox genes, throughout development. PcG PRC1 complex acts via chromatin remodeling and modification of histones; it mediates monoubiquitination of histone H2A 'Lys-119', rendering chromatin heritably changed in its expressibility. Within the PRC1-like complex, regulates RNF2 ubiquitin ligase activity.</text>
</comment>
<comment type="subunit">
    <text evidence="1">Component of a PRC1-like complex.</text>
</comment>
<comment type="subcellular location">
    <subcellularLocation>
        <location evidence="1">Nucleus</location>
    </subcellularLocation>
</comment>
<organism>
    <name type="scientific">Xenopus tropicalis</name>
    <name type="common">Western clawed frog</name>
    <name type="synonym">Silurana tropicalis</name>
    <dbReference type="NCBI Taxonomy" id="8364"/>
    <lineage>
        <taxon>Eukaryota</taxon>
        <taxon>Metazoa</taxon>
        <taxon>Chordata</taxon>
        <taxon>Craniata</taxon>
        <taxon>Vertebrata</taxon>
        <taxon>Euteleostomi</taxon>
        <taxon>Amphibia</taxon>
        <taxon>Batrachia</taxon>
        <taxon>Anura</taxon>
        <taxon>Pipoidea</taxon>
        <taxon>Pipidae</taxon>
        <taxon>Xenopodinae</taxon>
        <taxon>Xenopus</taxon>
        <taxon>Silurana</taxon>
    </lineage>
</organism>